<feature type="chain" id="PRO_0000396998" description="Proteasome-associated ATPase">
    <location>
        <begin position="1"/>
        <end position="609"/>
    </location>
</feature>
<feature type="region of interest" description="Disordered" evidence="2">
    <location>
        <begin position="1"/>
        <end position="25"/>
    </location>
</feature>
<feature type="region of interest" description="Docks into pockets in the proteasome alpha-ring" evidence="1">
    <location>
        <begin position="608"/>
        <end position="609"/>
    </location>
</feature>
<feature type="coiled-coil region" evidence="1">
    <location>
        <begin position="19"/>
        <end position="96"/>
    </location>
</feature>
<feature type="binding site" evidence="1">
    <location>
        <begin position="296"/>
        <end position="301"/>
    </location>
    <ligand>
        <name>ATP</name>
        <dbReference type="ChEBI" id="CHEBI:30616"/>
    </ligand>
</feature>
<protein>
    <recommendedName>
        <fullName evidence="1">Proteasome-associated ATPase</fullName>
    </recommendedName>
    <alternativeName>
        <fullName evidence="1">AAA ATPase forming ring-shaped complexes</fullName>
        <shortName evidence="1">ARC</shortName>
    </alternativeName>
    <alternativeName>
        <fullName evidence="1">Mycobacterial proteasome ATPase</fullName>
    </alternativeName>
</protein>
<organism>
    <name type="scientific">Mycobacterium marinum (strain ATCC BAA-535 / M)</name>
    <dbReference type="NCBI Taxonomy" id="216594"/>
    <lineage>
        <taxon>Bacteria</taxon>
        <taxon>Bacillati</taxon>
        <taxon>Actinomycetota</taxon>
        <taxon>Actinomycetes</taxon>
        <taxon>Mycobacteriales</taxon>
        <taxon>Mycobacteriaceae</taxon>
        <taxon>Mycobacterium</taxon>
        <taxon>Mycobacterium ulcerans group</taxon>
    </lineage>
</organism>
<evidence type="ECO:0000255" key="1">
    <source>
        <dbReference type="HAMAP-Rule" id="MF_02112"/>
    </source>
</evidence>
<evidence type="ECO:0000256" key="2">
    <source>
        <dbReference type="SAM" id="MobiDB-lite"/>
    </source>
</evidence>
<accession>B2HFW2</accession>
<dbReference type="EMBL" id="CP000854">
    <property type="protein sequence ID" value="ACC41526.1"/>
    <property type="molecule type" value="Genomic_DNA"/>
</dbReference>
<dbReference type="RefSeq" id="WP_012394775.1">
    <property type="nucleotide sequence ID" value="NC_010612.1"/>
</dbReference>
<dbReference type="SMR" id="B2HFW2"/>
<dbReference type="STRING" id="216594.MMAR_3091"/>
<dbReference type="KEGG" id="mmi:MMAR_3091"/>
<dbReference type="eggNOG" id="COG1222">
    <property type="taxonomic scope" value="Bacteria"/>
</dbReference>
<dbReference type="HOGENOM" id="CLU_036054_0_0_11"/>
<dbReference type="OrthoDB" id="9809379at2"/>
<dbReference type="UniPathway" id="UPA00997"/>
<dbReference type="Proteomes" id="UP000001190">
    <property type="component" value="Chromosome"/>
</dbReference>
<dbReference type="GO" id="GO:0000502">
    <property type="term" value="C:proteasome complex"/>
    <property type="evidence" value="ECO:0007669"/>
    <property type="project" value="UniProtKB-KW"/>
</dbReference>
<dbReference type="GO" id="GO:0005524">
    <property type="term" value="F:ATP binding"/>
    <property type="evidence" value="ECO:0007669"/>
    <property type="project" value="UniProtKB-UniRule"/>
</dbReference>
<dbReference type="GO" id="GO:0016887">
    <property type="term" value="F:ATP hydrolysis activity"/>
    <property type="evidence" value="ECO:0007669"/>
    <property type="project" value="UniProtKB-UniRule"/>
</dbReference>
<dbReference type="GO" id="GO:0019941">
    <property type="term" value="P:modification-dependent protein catabolic process"/>
    <property type="evidence" value="ECO:0007669"/>
    <property type="project" value="InterPro"/>
</dbReference>
<dbReference type="GO" id="GO:0010498">
    <property type="term" value="P:proteasomal protein catabolic process"/>
    <property type="evidence" value="ECO:0007669"/>
    <property type="project" value="InterPro"/>
</dbReference>
<dbReference type="FunFam" id="1.10.8.60:FF:000122">
    <property type="entry name" value="AAA ATPase forming ring-shaped complexes"/>
    <property type="match status" value="1"/>
</dbReference>
<dbReference type="FunFam" id="1.20.5.170:FF:000018">
    <property type="entry name" value="AAA ATPase forming ring-shaped complexes"/>
    <property type="match status" value="1"/>
</dbReference>
<dbReference type="FunFam" id="2.40.50.140:FF:000169">
    <property type="entry name" value="AAA ATPase forming ring-shaped complexes"/>
    <property type="match status" value="1"/>
</dbReference>
<dbReference type="FunFam" id="3.40.50.300:FF:000155">
    <property type="entry name" value="AAA ATPase forming ring-shaped complexes"/>
    <property type="match status" value="1"/>
</dbReference>
<dbReference type="Gene3D" id="1.10.8.60">
    <property type="match status" value="1"/>
</dbReference>
<dbReference type="Gene3D" id="1.20.5.170">
    <property type="match status" value="1"/>
</dbReference>
<dbReference type="Gene3D" id="2.40.50.140">
    <property type="entry name" value="Nucleic acid-binding proteins"/>
    <property type="match status" value="2"/>
</dbReference>
<dbReference type="Gene3D" id="3.40.50.300">
    <property type="entry name" value="P-loop containing nucleotide triphosphate hydrolases"/>
    <property type="match status" value="1"/>
</dbReference>
<dbReference type="HAMAP" id="MF_02112">
    <property type="entry name" value="ARC_ATPase"/>
    <property type="match status" value="1"/>
</dbReference>
<dbReference type="InterPro" id="IPR003593">
    <property type="entry name" value="AAA+_ATPase"/>
</dbReference>
<dbReference type="InterPro" id="IPR050168">
    <property type="entry name" value="AAA_ATPase_domain"/>
</dbReference>
<dbReference type="InterPro" id="IPR003959">
    <property type="entry name" value="ATPase_AAA_core"/>
</dbReference>
<dbReference type="InterPro" id="IPR003960">
    <property type="entry name" value="ATPase_AAA_CS"/>
</dbReference>
<dbReference type="InterPro" id="IPR012340">
    <property type="entry name" value="NA-bd_OB-fold"/>
</dbReference>
<dbReference type="InterPro" id="IPR027417">
    <property type="entry name" value="P-loop_NTPase"/>
</dbReference>
<dbReference type="InterPro" id="IPR032501">
    <property type="entry name" value="Prot_ATP_ID_OB_2nd"/>
</dbReference>
<dbReference type="InterPro" id="IPR041626">
    <property type="entry name" value="Prot_ATP_ID_OB_N"/>
</dbReference>
<dbReference type="InterPro" id="IPR022482">
    <property type="entry name" value="Proteasome_ATPase"/>
</dbReference>
<dbReference type="NCBIfam" id="TIGR03689">
    <property type="entry name" value="pup_AAA"/>
    <property type="match status" value="1"/>
</dbReference>
<dbReference type="PANTHER" id="PTHR23077">
    <property type="entry name" value="AAA-FAMILY ATPASE"/>
    <property type="match status" value="1"/>
</dbReference>
<dbReference type="PANTHER" id="PTHR23077:SF144">
    <property type="entry name" value="PROTEASOME-ASSOCIATED ATPASE"/>
    <property type="match status" value="1"/>
</dbReference>
<dbReference type="Pfam" id="PF00004">
    <property type="entry name" value="AAA"/>
    <property type="match status" value="1"/>
</dbReference>
<dbReference type="Pfam" id="PF16450">
    <property type="entry name" value="Prot_ATP_ID_OB_C"/>
    <property type="match status" value="1"/>
</dbReference>
<dbReference type="Pfam" id="PF17758">
    <property type="entry name" value="Prot_ATP_ID_OB_N"/>
    <property type="match status" value="1"/>
</dbReference>
<dbReference type="SMART" id="SM00382">
    <property type="entry name" value="AAA"/>
    <property type="match status" value="1"/>
</dbReference>
<dbReference type="SUPFAM" id="SSF52540">
    <property type="entry name" value="P-loop containing nucleoside triphosphate hydrolases"/>
    <property type="match status" value="1"/>
</dbReference>
<dbReference type="PROSITE" id="PS00674">
    <property type="entry name" value="AAA"/>
    <property type="match status" value="1"/>
</dbReference>
<name>ARC_MYCMM</name>
<keyword id="KW-0067">ATP-binding</keyword>
<keyword id="KW-0143">Chaperone</keyword>
<keyword id="KW-0175">Coiled coil</keyword>
<keyword id="KW-0547">Nucleotide-binding</keyword>
<keyword id="KW-0647">Proteasome</keyword>
<keyword id="KW-1185">Reference proteome</keyword>
<comment type="function">
    <text evidence="1">ATPase which is responsible for recognizing, binding, unfolding and translocation of pupylated proteins into the bacterial 20S proteasome core particle. May be essential for opening the gate of the 20S proteasome via an interaction with its C-terminus, thereby allowing substrate entry and access to the site of proteolysis. Thus, the C-termini of the proteasomal ATPase may function like a 'key in a lock' to induce gate opening and therefore regulate proteolysis.</text>
</comment>
<comment type="pathway">
    <text evidence="1">Protein degradation; proteasomal Pup-dependent pathway.</text>
</comment>
<comment type="subunit">
    <text evidence="1">Homohexamer. Assembles into a hexameric ring structure that caps the 20S proteasome core. Strongly interacts with the prokaryotic ubiquitin-like protein Pup through a hydrophobic interface; the interacting region of ARC lies in its N-terminal coiled-coil domain. There is one Pup binding site per ARC hexamer ring. Upon ATP-binding, the C-terminus of ARC interacts with the alpha-rings of the proteasome core, possibly by binding to the intersubunit pockets.</text>
</comment>
<comment type="domain">
    <text evidence="1">Consists of three main regions, an N-terminal coiled-coil domain that binds to protein Pup and functions as a docking station, an interdomain involved in ARC hexamerization, and a C-terminal ATPase domain of the AAA type.</text>
</comment>
<comment type="similarity">
    <text evidence="1">Belongs to the AAA ATPase family.</text>
</comment>
<sequence>MADSERSEAFGTPDDTPLSSNDAAELEQLRREAAVLREQLESAVGPQGTARSARDVHQLEARIDSLAARNSKLMETLKEARQQLLALREEVDRLGQPPSGYGVLLSTHDDDTVDVFTSGRKMRLTCSPNIEISLLRKGQTVRLNEALTVVEAGTFESVGEISTLREVLADGHRALVVGHADEERIVWLAEPLVAEDLPDGFPDALNDDTKPRKLRPGDSLLVDTKAGYAFERIPKAEVEDLVLEEVPDVSYEDIGGLTRQIEQIRDAVELPFLHKELYREYALRPPKGVLLYGPPGCGKTLIAKAVANSLAKKMAEVRGDDSREAKSYFLNIKGPELLNKFVGETERHIRLIFQRAREKASEGTPVIVFFDEMDSIFRTRGTGVSSDVETTVVPQLLSEIDGVEGLENVIVIGASNREDMIDPAILRPGRLDVKIKIERPDAEAAQDIYSKYLTETLPVHADDLAEFEGERPACIKAMIEKVVDRMYAEIDDNRFLEVTYANGDKEVMYFKDFNSGAMIQNVVDRAKKNAIKSVLETGQPGLRIQHLLDSIVDEFAENEDLPNTTNPDDWARISGKKGERIVYIRTLVTGKSSSASRAIDTESNLGQYL</sequence>
<gene>
    <name evidence="1" type="primary">mpa</name>
    <name type="ordered locus">MMAR_3091</name>
</gene>
<proteinExistence type="inferred from homology"/>
<reference key="1">
    <citation type="journal article" date="2008" name="Genome Res.">
        <title>Insights from the complete genome sequence of Mycobacterium marinum on the evolution of Mycobacterium tuberculosis.</title>
        <authorList>
            <person name="Stinear T.P."/>
            <person name="Seemann T."/>
            <person name="Harrison P.F."/>
            <person name="Jenkin G.A."/>
            <person name="Davies J.K."/>
            <person name="Johnson P.D."/>
            <person name="Abdellah Z."/>
            <person name="Arrowsmith C."/>
            <person name="Chillingworth T."/>
            <person name="Churcher C."/>
            <person name="Clarke K."/>
            <person name="Cronin A."/>
            <person name="Davis P."/>
            <person name="Goodhead I."/>
            <person name="Holroyd N."/>
            <person name="Jagels K."/>
            <person name="Lord A."/>
            <person name="Moule S."/>
            <person name="Mungall K."/>
            <person name="Norbertczak H."/>
            <person name="Quail M.A."/>
            <person name="Rabbinowitsch E."/>
            <person name="Walker D."/>
            <person name="White B."/>
            <person name="Whitehead S."/>
            <person name="Small P.L."/>
            <person name="Brosch R."/>
            <person name="Ramakrishnan L."/>
            <person name="Fischbach M.A."/>
            <person name="Parkhill J."/>
            <person name="Cole S.T."/>
        </authorList>
    </citation>
    <scope>NUCLEOTIDE SEQUENCE [LARGE SCALE GENOMIC DNA]</scope>
    <source>
        <strain>ATCC BAA-535 / M</strain>
    </source>
</reference>